<comment type="function">
    <text evidence="1 2">Receptor for chemoattractant adipokine chemerin/RARRES2 suggesting a role for this receptor in the regulation of inflammation and energy homesotasis (By similarity). Signals mainly via beta-arrestin pathway. Binding of RARRES2 activates weakly G proteins, calcium mobilization and MAPK1/MAPK3 (ERK1/2) phosphorylation too. Acts also as a receptor for TAFA1, mediates its effects on neuronal stem-cell proliferation and differentiation via the activation of ROCK/ERK and ROCK/STAT3 signaling pathway (By similarity).</text>
</comment>
<comment type="subcellular location">
    <subcellularLocation>
        <location evidence="2">Cell membrane</location>
        <topology evidence="3">Multi-pass membrane protein</topology>
    </subcellularLocation>
    <text evidence="1 2">Internalizes in presence of its ligand, TAFA1 (By similarity). Internalizes efficiently in response to RARRES2 (By similarity).</text>
</comment>
<comment type="similarity">
    <text evidence="5">Belongs to the chemokine-like receptor (CMKLR) family.</text>
</comment>
<accession>P46090</accession>
<accession>M0RCK7</accession>
<feature type="chain" id="PRO_0000069509" description="Chemerin-like receptor 2">
    <location>
        <begin position="1"/>
        <end position="353"/>
    </location>
</feature>
<feature type="topological domain" description="Extracellular" evidence="3">
    <location>
        <begin position="1"/>
        <end position="41"/>
    </location>
</feature>
<feature type="transmembrane region" description="Helical; Name=1" evidence="3">
    <location>
        <begin position="42"/>
        <end position="62"/>
    </location>
</feature>
<feature type="topological domain" description="Cytoplasmic" evidence="3">
    <location>
        <begin position="63"/>
        <end position="73"/>
    </location>
</feature>
<feature type="transmembrane region" description="Helical; Name=2" evidence="3">
    <location>
        <begin position="74"/>
        <end position="94"/>
    </location>
</feature>
<feature type="topological domain" description="Extracellular" evidence="3">
    <location>
        <begin position="95"/>
        <end position="112"/>
    </location>
</feature>
<feature type="transmembrane region" description="Helical; Name=3" evidence="3">
    <location>
        <begin position="113"/>
        <end position="133"/>
    </location>
</feature>
<feature type="topological domain" description="Cytoplasmic" evidence="3">
    <location>
        <begin position="134"/>
        <end position="154"/>
    </location>
</feature>
<feature type="transmembrane region" description="Helical; Name=4" evidence="3">
    <location>
        <begin position="155"/>
        <end position="175"/>
    </location>
</feature>
<feature type="topological domain" description="Extracellular" evidence="3">
    <location>
        <begin position="176"/>
        <end position="210"/>
    </location>
</feature>
<feature type="transmembrane region" description="Helical; Name=5" evidence="3">
    <location>
        <begin position="211"/>
        <end position="231"/>
    </location>
</feature>
<feature type="topological domain" description="Cytoplasmic" evidence="3">
    <location>
        <begin position="232"/>
        <end position="247"/>
    </location>
</feature>
<feature type="transmembrane region" description="Helical; Name=6" evidence="3">
    <location>
        <begin position="248"/>
        <end position="268"/>
    </location>
</feature>
<feature type="topological domain" description="Extracellular" evidence="3">
    <location>
        <begin position="269"/>
        <end position="286"/>
    </location>
</feature>
<feature type="transmembrane region" description="Helical; Name=7" evidence="3">
    <location>
        <begin position="287"/>
        <end position="307"/>
    </location>
</feature>
<feature type="topological domain" description="Cytoplasmic" evidence="3">
    <location>
        <begin position="308"/>
        <end position="353"/>
    </location>
</feature>
<feature type="glycosylation site" description="N-linked (GlcNAc...) asparagine" evidence="3">
    <location>
        <position position="14"/>
    </location>
</feature>
<feature type="disulfide bond" evidence="4">
    <location>
        <begin position="110"/>
        <end position="187"/>
    </location>
</feature>
<feature type="sequence conflict" description="In Ref. 1; AAB32978." ref="1">
    <original>V</original>
    <variation>I</variation>
    <location>
        <position position="85"/>
    </location>
</feature>
<feature type="sequence conflict" description="In Ref. 1; AAB32978." ref="1">
    <original>L</original>
    <variation>I</variation>
    <location>
        <position position="304"/>
    </location>
</feature>
<keyword id="KW-1003">Cell membrane</keyword>
<keyword id="KW-1015">Disulfide bond</keyword>
<keyword id="KW-0297">G-protein coupled receptor</keyword>
<keyword id="KW-0325">Glycoprotein</keyword>
<keyword id="KW-0472">Membrane</keyword>
<keyword id="KW-0675">Receptor</keyword>
<keyword id="KW-1185">Reference proteome</keyword>
<keyword id="KW-0807">Transducer</keyword>
<keyword id="KW-0812">Transmembrane</keyword>
<keyword id="KW-1133">Transmembrane helix</keyword>
<evidence type="ECO:0000250" key="1">
    <source>
        <dbReference type="UniProtKB" id="P46091"/>
    </source>
</evidence>
<evidence type="ECO:0000250" key="2">
    <source>
        <dbReference type="UniProtKB" id="Q8K087"/>
    </source>
</evidence>
<evidence type="ECO:0000255" key="3"/>
<evidence type="ECO:0000255" key="4">
    <source>
        <dbReference type="PROSITE-ProRule" id="PRU00521"/>
    </source>
</evidence>
<evidence type="ECO:0000305" key="5"/>
<evidence type="ECO:0000312" key="6">
    <source>
        <dbReference type="RGD" id="2728"/>
    </source>
</evidence>
<proteinExistence type="inferred from homology"/>
<protein>
    <recommendedName>
        <fullName>Chemerin-like receptor 2</fullName>
    </recommendedName>
    <alternativeName>
        <fullName>Chemerin chemokine-like receptor 2</fullName>
    </alternativeName>
    <alternativeName>
        <fullName>Chemokine-like receptor 2</fullName>
    </alternativeName>
    <alternativeName>
        <fullName>G-protein coupled receptor 1</fullName>
    </alternativeName>
</protein>
<reference key="1">
    <citation type="journal article" date="1994" name="Biochem. Biophys. Res. Commun.">
        <title>Mapping studies of two G protein-coupled receptor genes: an amino acid difference may confer a functional variation between a human and rodent receptor.</title>
        <authorList>
            <person name="Marchese A."/>
            <person name="Cheng R."/>
            <person name="Lee M.C."/>
            <person name="Porter C.A."/>
            <person name="Heiber M."/>
            <person name="Goodman M."/>
            <person name="George S.R."/>
            <person name="O'Dowd B.F."/>
        </authorList>
    </citation>
    <scope>NUCLEOTIDE SEQUENCE [GENOMIC DNA]</scope>
</reference>
<reference key="2">
    <citation type="journal article" date="2004" name="Nature">
        <title>Genome sequence of the Brown Norway rat yields insights into mammalian evolution.</title>
        <authorList>
            <person name="Gibbs R.A."/>
            <person name="Weinstock G.M."/>
            <person name="Metzker M.L."/>
            <person name="Muzny D.M."/>
            <person name="Sodergren E.J."/>
            <person name="Scherer S."/>
            <person name="Scott G."/>
            <person name="Steffen D."/>
            <person name="Worley K.C."/>
            <person name="Burch P.E."/>
            <person name="Okwuonu G."/>
            <person name="Hines S."/>
            <person name="Lewis L."/>
            <person name="Deramo C."/>
            <person name="Delgado O."/>
            <person name="Dugan-Rocha S."/>
            <person name="Miner G."/>
            <person name="Morgan M."/>
            <person name="Hawes A."/>
            <person name="Gill R."/>
            <person name="Holt R.A."/>
            <person name="Adams M.D."/>
            <person name="Amanatides P.G."/>
            <person name="Baden-Tillson H."/>
            <person name="Barnstead M."/>
            <person name="Chin S."/>
            <person name="Evans C.A."/>
            <person name="Ferriera S."/>
            <person name="Fosler C."/>
            <person name="Glodek A."/>
            <person name="Gu Z."/>
            <person name="Jennings D."/>
            <person name="Kraft C.L."/>
            <person name="Nguyen T."/>
            <person name="Pfannkoch C.M."/>
            <person name="Sitter C."/>
            <person name="Sutton G.G."/>
            <person name="Venter J.C."/>
            <person name="Woodage T."/>
            <person name="Smith D."/>
            <person name="Lee H.-M."/>
            <person name="Gustafson E."/>
            <person name="Cahill P."/>
            <person name="Kana A."/>
            <person name="Doucette-Stamm L."/>
            <person name="Weinstock K."/>
            <person name="Fechtel K."/>
            <person name="Weiss R.B."/>
            <person name="Dunn D.M."/>
            <person name="Green E.D."/>
            <person name="Blakesley R.W."/>
            <person name="Bouffard G.G."/>
            <person name="De Jong P.J."/>
            <person name="Osoegawa K."/>
            <person name="Zhu B."/>
            <person name="Marra M."/>
            <person name="Schein J."/>
            <person name="Bosdet I."/>
            <person name="Fjell C."/>
            <person name="Jones S."/>
            <person name="Krzywinski M."/>
            <person name="Mathewson C."/>
            <person name="Siddiqui A."/>
            <person name="Wye N."/>
            <person name="McPherson J."/>
            <person name="Zhao S."/>
            <person name="Fraser C.M."/>
            <person name="Shetty J."/>
            <person name="Shatsman S."/>
            <person name="Geer K."/>
            <person name="Chen Y."/>
            <person name="Abramzon S."/>
            <person name="Nierman W.C."/>
            <person name="Havlak P.H."/>
            <person name="Chen R."/>
            <person name="Durbin K.J."/>
            <person name="Egan A."/>
            <person name="Ren Y."/>
            <person name="Song X.-Z."/>
            <person name="Li B."/>
            <person name="Liu Y."/>
            <person name="Qin X."/>
            <person name="Cawley S."/>
            <person name="Cooney A.J."/>
            <person name="D'Souza L.M."/>
            <person name="Martin K."/>
            <person name="Wu J.Q."/>
            <person name="Gonzalez-Garay M.L."/>
            <person name="Jackson A.R."/>
            <person name="Kalafus K.J."/>
            <person name="McLeod M.P."/>
            <person name="Milosavljevic A."/>
            <person name="Virk D."/>
            <person name="Volkov A."/>
            <person name="Wheeler D.A."/>
            <person name="Zhang Z."/>
            <person name="Bailey J.A."/>
            <person name="Eichler E.E."/>
            <person name="Tuzun E."/>
            <person name="Birney E."/>
            <person name="Mongin E."/>
            <person name="Ureta-Vidal A."/>
            <person name="Woodwark C."/>
            <person name="Zdobnov E."/>
            <person name="Bork P."/>
            <person name="Suyama M."/>
            <person name="Torrents D."/>
            <person name="Alexandersson M."/>
            <person name="Trask B.J."/>
            <person name="Young J.M."/>
            <person name="Huang H."/>
            <person name="Wang H."/>
            <person name="Xing H."/>
            <person name="Daniels S."/>
            <person name="Gietzen D."/>
            <person name="Schmidt J."/>
            <person name="Stevens K."/>
            <person name="Vitt U."/>
            <person name="Wingrove J."/>
            <person name="Camara F."/>
            <person name="Mar Alba M."/>
            <person name="Abril J.F."/>
            <person name="Guigo R."/>
            <person name="Smit A."/>
            <person name="Dubchak I."/>
            <person name="Rubin E.M."/>
            <person name="Couronne O."/>
            <person name="Poliakov A."/>
            <person name="Huebner N."/>
            <person name="Ganten D."/>
            <person name="Goesele C."/>
            <person name="Hummel O."/>
            <person name="Kreitler T."/>
            <person name="Lee Y.-A."/>
            <person name="Monti J."/>
            <person name="Schulz H."/>
            <person name="Zimdahl H."/>
            <person name="Himmelbauer H."/>
            <person name="Lehrach H."/>
            <person name="Jacob H.J."/>
            <person name="Bromberg S."/>
            <person name="Gullings-Handley J."/>
            <person name="Jensen-Seaman M.I."/>
            <person name="Kwitek A.E."/>
            <person name="Lazar J."/>
            <person name="Pasko D."/>
            <person name="Tonellato P.J."/>
            <person name="Twigger S."/>
            <person name="Ponting C.P."/>
            <person name="Duarte J.M."/>
            <person name="Rice S."/>
            <person name="Goodstadt L."/>
            <person name="Beatson S.A."/>
            <person name="Emes R.D."/>
            <person name="Winter E.E."/>
            <person name="Webber C."/>
            <person name="Brandt P."/>
            <person name="Nyakatura G."/>
            <person name="Adetobi M."/>
            <person name="Chiaromonte F."/>
            <person name="Elnitski L."/>
            <person name="Eswara P."/>
            <person name="Hardison R.C."/>
            <person name="Hou M."/>
            <person name="Kolbe D."/>
            <person name="Makova K."/>
            <person name="Miller W."/>
            <person name="Nekrutenko A."/>
            <person name="Riemer C."/>
            <person name="Schwartz S."/>
            <person name="Taylor J."/>
            <person name="Yang S."/>
            <person name="Zhang Y."/>
            <person name="Lindpaintner K."/>
            <person name="Andrews T.D."/>
            <person name="Caccamo M."/>
            <person name="Clamp M."/>
            <person name="Clarke L."/>
            <person name="Curwen V."/>
            <person name="Durbin R.M."/>
            <person name="Eyras E."/>
            <person name="Searle S.M."/>
            <person name="Cooper G.M."/>
            <person name="Batzoglou S."/>
            <person name="Brudno M."/>
            <person name="Sidow A."/>
            <person name="Stone E.A."/>
            <person name="Payseur B.A."/>
            <person name="Bourque G."/>
            <person name="Lopez-Otin C."/>
            <person name="Puente X.S."/>
            <person name="Chakrabarti K."/>
            <person name="Chatterji S."/>
            <person name="Dewey C."/>
            <person name="Pachter L."/>
            <person name="Bray N."/>
            <person name="Yap V.B."/>
            <person name="Caspi A."/>
            <person name="Tesler G."/>
            <person name="Pevzner P.A."/>
            <person name="Haussler D."/>
            <person name="Roskin K.M."/>
            <person name="Baertsch R."/>
            <person name="Clawson H."/>
            <person name="Furey T.S."/>
            <person name="Hinrichs A.S."/>
            <person name="Karolchik D."/>
            <person name="Kent W.J."/>
            <person name="Rosenbloom K.R."/>
            <person name="Trumbower H."/>
            <person name="Weirauch M."/>
            <person name="Cooper D.N."/>
            <person name="Stenson P.D."/>
            <person name="Ma B."/>
            <person name="Brent M."/>
            <person name="Arumugam M."/>
            <person name="Shteynberg D."/>
            <person name="Copley R.R."/>
            <person name="Taylor M.S."/>
            <person name="Riethman H."/>
            <person name="Mudunuri U."/>
            <person name="Peterson J."/>
            <person name="Guyer M."/>
            <person name="Felsenfeld A."/>
            <person name="Old S."/>
            <person name="Mockrin S."/>
            <person name="Collins F.S."/>
        </authorList>
    </citation>
    <scope>NUCLEOTIDE SEQUENCE [LARGE SCALE GENOMIC DNA]</scope>
    <source>
        <strain>Brown Norway</strain>
    </source>
</reference>
<organism>
    <name type="scientific">Rattus norvegicus</name>
    <name type="common">Rat</name>
    <dbReference type="NCBI Taxonomy" id="10116"/>
    <lineage>
        <taxon>Eukaryota</taxon>
        <taxon>Metazoa</taxon>
        <taxon>Chordata</taxon>
        <taxon>Craniata</taxon>
        <taxon>Vertebrata</taxon>
        <taxon>Euteleostomi</taxon>
        <taxon>Mammalia</taxon>
        <taxon>Eutheria</taxon>
        <taxon>Euarchontoglires</taxon>
        <taxon>Glires</taxon>
        <taxon>Rodentia</taxon>
        <taxon>Myomorpha</taxon>
        <taxon>Muroidea</taxon>
        <taxon>Muridae</taxon>
        <taxon>Murinae</taxon>
        <taxon>Rattus</taxon>
    </lineage>
</organism>
<sequence>MEVSREMLFEELDNYSYALEYYSQEPDAEENVYPGIVHWISLLLYALAFVLGIPGNAIVIWFMGFKWKKTVTTLWFLNLAIADFVFVLFLPLYISYVALSFHWPFGRWLCKLNSFIAQLNMFSSVFFLTVISLDRYIHLIHPGLSHPHRTLKNSLLVVLFVWLLASLLGGPTLYFRDTVEVNNRIICYNNFQEYELTLMRHHVLTWVKFLFGYLLPLLTMSSCYLCLIFKTKKQNILISSKHLWMILSVVIAFMVCWTPFHLFSIWELSIHHNSSFQNVLQGGIPLSTGLAFLNSCLNPILYVLISKKFQARFRASVAEVLKRSLWEASCSGTVSEQLRSAETKSLSLLETAQ</sequence>
<gene>
    <name type="primary">Cmklr2</name>
    <name evidence="6" type="synonym">Gpr1</name>
</gene>
<dbReference type="EMBL" id="S74702">
    <property type="protein sequence ID" value="AAB32978.1"/>
    <property type="molecule type" value="Genomic_DNA"/>
</dbReference>
<dbReference type="EMBL" id="AC141169">
    <property type="status" value="NOT_ANNOTATED_CDS"/>
    <property type="molecule type" value="Genomic_DNA"/>
</dbReference>
<dbReference type="EMBL" id="CH473965">
    <property type="protein sequence ID" value="EDL98895.1"/>
    <property type="molecule type" value="Genomic_DNA"/>
</dbReference>
<dbReference type="PIR" id="JC2492">
    <property type="entry name" value="JC2492"/>
</dbReference>
<dbReference type="RefSeq" id="NP_037093.2">
    <property type="nucleotide sequence ID" value="NM_012961.2"/>
</dbReference>
<dbReference type="RefSeq" id="XP_008765299.1">
    <property type="nucleotide sequence ID" value="XM_008767077.2"/>
</dbReference>
<dbReference type="RefSeq" id="XP_017451774.1">
    <property type="nucleotide sequence ID" value="XM_017596285.1"/>
</dbReference>
<dbReference type="RefSeq" id="XP_038938964.1">
    <property type="nucleotide sequence ID" value="XM_039083036.1"/>
</dbReference>
<dbReference type="RefSeq" id="XP_063122752.1">
    <property type="nucleotide sequence ID" value="XM_063266682.1"/>
</dbReference>
<dbReference type="SMR" id="P46090"/>
<dbReference type="FunCoup" id="P46090">
    <property type="interactions" value="15"/>
</dbReference>
<dbReference type="STRING" id="10116.ENSRNOP00000067327"/>
<dbReference type="GlyCosmos" id="P46090">
    <property type="glycosylation" value="1 site, No reported glycans"/>
</dbReference>
<dbReference type="GlyGen" id="P46090">
    <property type="glycosylation" value="1 site"/>
</dbReference>
<dbReference type="PhosphoSitePlus" id="P46090"/>
<dbReference type="PaxDb" id="10116-ENSRNOP00000067327"/>
<dbReference type="Ensembl" id="ENSRNOT00000072737.2">
    <property type="protein sequence ID" value="ENSRNOP00000067327.1"/>
    <property type="gene ID" value="ENSRNOG00000045532.2"/>
</dbReference>
<dbReference type="GeneID" id="25457"/>
<dbReference type="UCSC" id="RGD:2728">
    <property type="organism name" value="rat"/>
</dbReference>
<dbReference type="AGR" id="RGD:2728"/>
<dbReference type="RGD" id="2728">
    <property type="gene designation" value="Cmklr2"/>
</dbReference>
<dbReference type="eggNOG" id="KOG3656">
    <property type="taxonomic scope" value="Eukaryota"/>
</dbReference>
<dbReference type="GeneTree" id="ENSGT00940000160642"/>
<dbReference type="HOGENOM" id="CLU_009579_8_0_1"/>
<dbReference type="InParanoid" id="P46090"/>
<dbReference type="OMA" id="ISSKHFW"/>
<dbReference type="OrthoDB" id="6088892at2759"/>
<dbReference type="PhylomeDB" id="P46090"/>
<dbReference type="PRO" id="PR:P46090"/>
<dbReference type="Proteomes" id="UP000002494">
    <property type="component" value="Chromosome 9"/>
</dbReference>
<dbReference type="Proteomes" id="UP000234681">
    <property type="component" value="Chromosome 9"/>
</dbReference>
<dbReference type="Bgee" id="ENSRNOG00000045532">
    <property type="expression patterns" value="Expressed in skeletal muscle tissue and 2 other cell types or tissues"/>
</dbReference>
<dbReference type="GO" id="GO:0043005">
    <property type="term" value="C:neuron projection"/>
    <property type="evidence" value="ECO:0000318"/>
    <property type="project" value="GO_Central"/>
</dbReference>
<dbReference type="GO" id="GO:0005886">
    <property type="term" value="C:plasma membrane"/>
    <property type="evidence" value="ECO:0000250"/>
    <property type="project" value="UniProtKB"/>
</dbReference>
<dbReference type="GO" id="GO:0097004">
    <property type="term" value="F:adipokinetic hormone binding"/>
    <property type="evidence" value="ECO:0000250"/>
    <property type="project" value="UniProtKB"/>
</dbReference>
<dbReference type="GO" id="GO:0097003">
    <property type="term" value="F:adipokinetic hormone receptor activity"/>
    <property type="evidence" value="ECO:0000250"/>
    <property type="project" value="UniProtKB"/>
</dbReference>
<dbReference type="GO" id="GO:0004930">
    <property type="term" value="F:G protein-coupled receptor activity"/>
    <property type="evidence" value="ECO:0000318"/>
    <property type="project" value="GO_Central"/>
</dbReference>
<dbReference type="GO" id="GO:0042923">
    <property type="term" value="F:neuropeptide binding"/>
    <property type="evidence" value="ECO:0000318"/>
    <property type="project" value="GO_Central"/>
</dbReference>
<dbReference type="GO" id="GO:0042593">
    <property type="term" value="P:glucose homeostasis"/>
    <property type="evidence" value="ECO:0000250"/>
    <property type="project" value="UniProtKB"/>
</dbReference>
<dbReference type="GO" id="GO:0007218">
    <property type="term" value="P:neuropeptide signaling pathway"/>
    <property type="evidence" value="ECO:0000318"/>
    <property type="project" value="GO_Central"/>
</dbReference>
<dbReference type="CDD" id="cd15119">
    <property type="entry name" value="7tmA_GPR1"/>
    <property type="match status" value="1"/>
</dbReference>
<dbReference type="FunFam" id="1.20.1070.10:FF:000034">
    <property type="entry name" value="G-protein coupled receptor 1"/>
    <property type="match status" value="1"/>
</dbReference>
<dbReference type="Gene3D" id="1.20.1070.10">
    <property type="entry name" value="Rhodopsin 7-helix transmembrane proteins"/>
    <property type="match status" value="1"/>
</dbReference>
<dbReference type="InterPro" id="IPR002275">
    <property type="entry name" value="CML2"/>
</dbReference>
<dbReference type="InterPro" id="IPR000826">
    <property type="entry name" value="Formyl_rcpt-rel"/>
</dbReference>
<dbReference type="InterPro" id="IPR000276">
    <property type="entry name" value="GPCR_Rhodpsn"/>
</dbReference>
<dbReference type="InterPro" id="IPR017452">
    <property type="entry name" value="GPCR_Rhodpsn_7TM"/>
</dbReference>
<dbReference type="PANTHER" id="PTHR24225:SF74">
    <property type="entry name" value="CHEMOKINE-LIKE RECEPTOR 1"/>
    <property type="match status" value="1"/>
</dbReference>
<dbReference type="PANTHER" id="PTHR24225">
    <property type="entry name" value="CHEMOTACTIC RECEPTOR"/>
    <property type="match status" value="1"/>
</dbReference>
<dbReference type="Pfam" id="PF00001">
    <property type="entry name" value="7tm_1"/>
    <property type="match status" value="1"/>
</dbReference>
<dbReference type="PRINTS" id="PR00237">
    <property type="entry name" value="GPCRRHODOPSN"/>
</dbReference>
<dbReference type="PRINTS" id="PR01146">
    <property type="entry name" value="GPR1ORPHANR"/>
</dbReference>
<dbReference type="SUPFAM" id="SSF81321">
    <property type="entry name" value="Family A G protein-coupled receptor-like"/>
    <property type="match status" value="1"/>
</dbReference>
<dbReference type="PROSITE" id="PS00237">
    <property type="entry name" value="G_PROTEIN_RECEP_F1_1"/>
    <property type="match status" value="1"/>
</dbReference>
<dbReference type="PROSITE" id="PS50262">
    <property type="entry name" value="G_PROTEIN_RECEP_F1_2"/>
    <property type="match status" value="1"/>
</dbReference>
<name>CML2_RAT</name>